<sequence length="221" mass="24788">MELTLHEARVIGCLLEKEITTPEQYPLSLNALTLACNQKTSREPVLDLSEAQVQDALDSLTKKRLISEQSGFGSRVVKYKHRFCNTEFSELQLSPAAVAIVCLLLLRGPQTPGELRTRSNRLHEFKDVIEVEDCIKQLISRTKPILKQLPREPGRRESRYVELFSETSANVVTTSDHTDKPHIPPVAALVEHGALVARVTELEQHVATLTQKFDELIASLT</sequence>
<gene>
    <name type="ordered locus">Sputcn32_1644</name>
</gene>
<dbReference type="EMBL" id="CP000681">
    <property type="protein sequence ID" value="ABP75369.1"/>
    <property type="molecule type" value="Genomic_DNA"/>
</dbReference>
<dbReference type="SMR" id="A4Y5Y6"/>
<dbReference type="STRING" id="319224.Sputcn32_1644"/>
<dbReference type="KEGG" id="spc:Sputcn32_1644"/>
<dbReference type="eggNOG" id="COG3132">
    <property type="taxonomic scope" value="Bacteria"/>
</dbReference>
<dbReference type="HOGENOM" id="CLU_057831_2_0_6"/>
<dbReference type="Gene3D" id="1.10.10.10">
    <property type="entry name" value="Winged helix-like DNA-binding domain superfamily/Winged helix DNA-binding domain"/>
    <property type="match status" value="2"/>
</dbReference>
<dbReference type="HAMAP" id="MF_01584">
    <property type="entry name" value="UPF0502"/>
    <property type="match status" value="1"/>
</dbReference>
<dbReference type="InterPro" id="IPR007432">
    <property type="entry name" value="DUF480"/>
</dbReference>
<dbReference type="InterPro" id="IPR036388">
    <property type="entry name" value="WH-like_DNA-bd_sf"/>
</dbReference>
<dbReference type="InterPro" id="IPR036390">
    <property type="entry name" value="WH_DNA-bd_sf"/>
</dbReference>
<dbReference type="PANTHER" id="PTHR38768">
    <property type="entry name" value="UPF0502 PROTEIN YCEH"/>
    <property type="match status" value="1"/>
</dbReference>
<dbReference type="PANTHER" id="PTHR38768:SF1">
    <property type="entry name" value="UPF0502 PROTEIN YCEH"/>
    <property type="match status" value="1"/>
</dbReference>
<dbReference type="Pfam" id="PF04337">
    <property type="entry name" value="DUF480"/>
    <property type="match status" value="1"/>
</dbReference>
<dbReference type="SUPFAM" id="SSF46785">
    <property type="entry name" value="Winged helix' DNA-binding domain"/>
    <property type="match status" value="2"/>
</dbReference>
<protein>
    <recommendedName>
        <fullName evidence="1">UPF0502 protein Sputcn32_1644</fullName>
    </recommendedName>
</protein>
<feature type="chain" id="PRO_1000069305" description="UPF0502 protein Sputcn32_1644">
    <location>
        <begin position="1"/>
        <end position="221"/>
    </location>
</feature>
<name>Y1644_SHEPC</name>
<reference key="1">
    <citation type="submission" date="2007-04" db="EMBL/GenBank/DDBJ databases">
        <title>Complete sequence of Shewanella putrefaciens CN-32.</title>
        <authorList>
            <consortium name="US DOE Joint Genome Institute"/>
            <person name="Copeland A."/>
            <person name="Lucas S."/>
            <person name="Lapidus A."/>
            <person name="Barry K."/>
            <person name="Detter J.C."/>
            <person name="Glavina del Rio T."/>
            <person name="Hammon N."/>
            <person name="Israni S."/>
            <person name="Dalin E."/>
            <person name="Tice H."/>
            <person name="Pitluck S."/>
            <person name="Chain P."/>
            <person name="Malfatti S."/>
            <person name="Shin M."/>
            <person name="Vergez L."/>
            <person name="Schmutz J."/>
            <person name="Larimer F."/>
            <person name="Land M."/>
            <person name="Hauser L."/>
            <person name="Kyrpides N."/>
            <person name="Mikhailova N."/>
            <person name="Romine M.F."/>
            <person name="Fredrickson J."/>
            <person name="Tiedje J."/>
            <person name="Richardson P."/>
        </authorList>
    </citation>
    <scope>NUCLEOTIDE SEQUENCE [LARGE SCALE GENOMIC DNA]</scope>
    <source>
        <strain>CN-32 / ATCC BAA-453</strain>
    </source>
</reference>
<comment type="similarity">
    <text evidence="1">Belongs to the UPF0502 family.</text>
</comment>
<proteinExistence type="inferred from homology"/>
<accession>A4Y5Y6</accession>
<evidence type="ECO:0000255" key="1">
    <source>
        <dbReference type="HAMAP-Rule" id="MF_01584"/>
    </source>
</evidence>
<organism>
    <name type="scientific">Shewanella putrefaciens (strain CN-32 / ATCC BAA-453)</name>
    <dbReference type="NCBI Taxonomy" id="319224"/>
    <lineage>
        <taxon>Bacteria</taxon>
        <taxon>Pseudomonadati</taxon>
        <taxon>Pseudomonadota</taxon>
        <taxon>Gammaproteobacteria</taxon>
        <taxon>Alteromonadales</taxon>
        <taxon>Shewanellaceae</taxon>
        <taxon>Shewanella</taxon>
    </lineage>
</organism>